<dbReference type="EMBL" id="AE008923">
    <property type="protein sequence ID" value="AAM35269.1"/>
    <property type="molecule type" value="Genomic_DNA"/>
</dbReference>
<dbReference type="RefSeq" id="WP_011050278.1">
    <property type="nucleotide sequence ID" value="NC_003919.1"/>
</dbReference>
<dbReference type="SMR" id="Q8PQE8"/>
<dbReference type="GeneID" id="66909591"/>
<dbReference type="KEGG" id="xac:XAC0377"/>
<dbReference type="eggNOG" id="COG0445">
    <property type="taxonomic scope" value="Bacteria"/>
</dbReference>
<dbReference type="HOGENOM" id="CLU_007831_2_2_6"/>
<dbReference type="Proteomes" id="UP000000576">
    <property type="component" value="Chromosome"/>
</dbReference>
<dbReference type="GO" id="GO:0005829">
    <property type="term" value="C:cytosol"/>
    <property type="evidence" value="ECO:0007669"/>
    <property type="project" value="TreeGrafter"/>
</dbReference>
<dbReference type="GO" id="GO:0050660">
    <property type="term" value="F:flavin adenine dinucleotide binding"/>
    <property type="evidence" value="ECO:0007669"/>
    <property type="project" value="UniProtKB-UniRule"/>
</dbReference>
<dbReference type="GO" id="GO:0030488">
    <property type="term" value="P:tRNA methylation"/>
    <property type="evidence" value="ECO:0007669"/>
    <property type="project" value="TreeGrafter"/>
</dbReference>
<dbReference type="GO" id="GO:0002098">
    <property type="term" value="P:tRNA wobble uridine modification"/>
    <property type="evidence" value="ECO:0007669"/>
    <property type="project" value="InterPro"/>
</dbReference>
<dbReference type="FunFam" id="1.10.10.1800:FF:000001">
    <property type="entry name" value="tRNA uridine 5-carboxymethylaminomethyl modification enzyme MnmG"/>
    <property type="match status" value="1"/>
</dbReference>
<dbReference type="FunFam" id="1.10.150.570:FF:000001">
    <property type="entry name" value="tRNA uridine 5-carboxymethylaminomethyl modification enzyme MnmG"/>
    <property type="match status" value="1"/>
</dbReference>
<dbReference type="FunFam" id="3.50.50.60:FF:000002">
    <property type="entry name" value="tRNA uridine 5-carboxymethylaminomethyl modification enzyme MnmG"/>
    <property type="match status" value="1"/>
</dbReference>
<dbReference type="FunFam" id="3.50.50.60:FF:000010">
    <property type="entry name" value="tRNA uridine 5-carboxymethylaminomethyl modification enzyme MnmG"/>
    <property type="match status" value="1"/>
</dbReference>
<dbReference type="Gene3D" id="3.50.50.60">
    <property type="entry name" value="FAD/NAD(P)-binding domain"/>
    <property type="match status" value="2"/>
</dbReference>
<dbReference type="Gene3D" id="1.10.150.570">
    <property type="entry name" value="GidA associated domain, C-terminal subdomain"/>
    <property type="match status" value="1"/>
</dbReference>
<dbReference type="Gene3D" id="1.10.10.1800">
    <property type="entry name" value="tRNA uridine 5-carboxymethylaminomethyl modification enzyme MnmG/GidA"/>
    <property type="match status" value="1"/>
</dbReference>
<dbReference type="HAMAP" id="MF_00129">
    <property type="entry name" value="MnmG_GidA"/>
    <property type="match status" value="1"/>
</dbReference>
<dbReference type="InterPro" id="IPR036188">
    <property type="entry name" value="FAD/NAD-bd_sf"/>
</dbReference>
<dbReference type="InterPro" id="IPR049312">
    <property type="entry name" value="GIDA_C_N"/>
</dbReference>
<dbReference type="InterPro" id="IPR004416">
    <property type="entry name" value="MnmG"/>
</dbReference>
<dbReference type="InterPro" id="IPR002218">
    <property type="entry name" value="MnmG-rel"/>
</dbReference>
<dbReference type="InterPro" id="IPR020595">
    <property type="entry name" value="MnmG-rel_CS"/>
</dbReference>
<dbReference type="InterPro" id="IPR026904">
    <property type="entry name" value="MnmG_C"/>
</dbReference>
<dbReference type="InterPro" id="IPR047001">
    <property type="entry name" value="MnmG_C_subdom"/>
</dbReference>
<dbReference type="InterPro" id="IPR044920">
    <property type="entry name" value="MnmG_C_subdom_sf"/>
</dbReference>
<dbReference type="InterPro" id="IPR040131">
    <property type="entry name" value="MnmG_N"/>
</dbReference>
<dbReference type="NCBIfam" id="TIGR00136">
    <property type="entry name" value="mnmG_gidA"/>
    <property type="match status" value="1"/>
</dbReference>
<dbReference type="PANTHER" id="PTHR11806">
    <property type="entry name" value="GLUCOSE INHIBITED DIVISION PROTEIN A"/>
    <property type="match status" value="1"/>
</dbReference>
<dbReference type="PANTHER" id="PTHR11806:SF0">
    <property type="entry name" value="PROTEIN MTO1 HOMOLOG, MITOCHONDRIAL"/>
    <property type="match status" value="1"/>
</dbReference>
<dbReference type="Pfam" id="PF01134">
    <property type="entry name" value="GIDA"/>
    <property type="match status" value="1"/>
</dbReference>
<dbReference type="Pfam" id="PF21680">
    <property type="entry name" value="GIDA_C_1st"/>
    <property type="match status" value="1"/>
</dbReference>
<dbReference type="Pfam" id="PF13932">
    <property type="entry name" value="SAM_GIDA_C"/>
    <property type="match status" value="1"/>
</dbReference>
<dbReference type="SMART" id="SM01228">
    <property type="entry name" value="GIDA_assoc_3"/>
    <property type="match status" value="1"/>
</dbReference>
<dbReference type="SUPFAM" id="SSF51905">
    <property type="entry name" value="FAD/NAD(P)-binding domain"/>
    <property type="match status" value="1"/>
</dbReference>
<dbReference type="PROSITE" id="PS01280">
    <property type="entry name" value="GIDA_1"/>
    <property type="match status" value="1"/>
</dbReference>
<dbReference type="PROSITE" id="PS01281">
    <property type="entry name" value="GIDA_2"/>
    <property type="match status" value="1"/>
</dbReference>
<keyword id="KW-0963">Cytoplasm</keyword>
<keyword id="KW-0274">FAD</keyword>
<keyword id="KW-0285">Flavoprotein</keyword>
<keyword id="KW-0520">NAD</keyword>
<keyword id="KW-0819">tRNA processing</keyword>
<comment type="function">
    <text evidence="1">NAD-binding protein involved in the addition of a carboxymethylaminomethyl (cmnm) group at the wobble position (U34) of certain tRNAs, forming tRNA-cmnm(5)s(2)U34.</text>
</comment>
<comment type="cofactor">
    <cofactor evidence="1">
        <name>FAD</name>
        <dbReference type="ChEBI" id="CHEBI:57692"/>
    </cofactor>
</comment>
<comment type="subunit">
    <text evidence="1">Homodimer. Heterotetramer of two MnmE and two MnmG subunits.</text>
</comment>
<comment type="subcellular location">
    <subcellularLocation>
        <location evidence="1">Cytoplasm</location>
    </subcellularLocation>
</comment>
<comment type="similarity">
    <text evidence="1">Belongs to the MnmG family.</text>
</comment>
<sequence>MSDSFYRYDVIVIGGGHAGTEAALASARAGARTLLLTHNIETVGAMSCNPAIGGIGKGHLVKEIDALGGAMARAADLAGIQWRTLNASKGPAVRATRCQADRNLYRTAIRCIVEAQPNLTVFQAAVDDLIIHHGASEADSVRGVITQTGLRFQAPSVVLTAGTFLAGKIHVGQTQYAAGRMGDPPATTLAARLRERPFAIDRLKTGTPPRIDGRTLDYGVMAEQPGDDPLPVMSFMGQVSDHPRQVSCWITQTTEQTHEIIRNALHRSPLYSGQIEGIGPRYCPSIEDKVVRFAEKTSHQIFVEPEGLEVAEIYPNGISTSLPFDVQLALVRSIHGFANAHITRPGYAIEYDFFDPRGLKASLETKAVGGLFFAGQINGTTGYEEAAAQGLLAGLNAARHVQGLPAWSPRRDEAYLGVLVDDLITHGTTEPYRMFTSRAEYRLQLREDNADARLTGVGRAMGLVDDARWARFAAKQEAVQRETARLSALWATPGNALGREVADALGVTVSRETNVLDLIKRPELTYATLMRVPTLGPGVDDAQVAEQVEISVKYAGYLDRQRDDIARQQRHETTPIPDGFDYASVRGLSIEVQQKLERVRPQHIGQAQRIPGMTPAAISLLLVHLERARRSQVA</sequence>
<accession>Q8PQE8</accession>
<evidence type="ECO:0000255" key="1">
    <source>
        <dbReference type="HAMAP-Rule" id="MF_00129"/>
    </source>
</evidence>
<gene>
    <name evidence="1" type="primary">mnmG</name>
    <name evidence="1" type="synonym">gidA</name>
    <name type="ordered locus">XAC0377</name>
</gene>
<protein>
    <recommendedName>
        <fullName evidence="1">tRNA uridine 5-carboxymethylaminomethyl modification enzyme MnmG</fullName>
    </recommendedName>
    <alternativeName>
        <fullName evidence="1">Glucose-inhibited division protein A</fullName>
    </alternativeName>
</protein>
<name>MNMG_XANAC</name>
<proteinExistence type="inferred from homology"/>
<reference key="1">
    <citation type="journal article" date="2002" name="Nature">
        <title>Comparison of the genomes of two Xanthomonas pathogens with differing host specificities.</title>
        <authorList>
            <person name="da Silva A.C.R."/>
            <person name="Ferro J.A."/>
            <person name="Reinach F.C."/>
            <person name="Farah C.S."/>
            <person name="Furlan L.R."/>
            <person name="Quaggio R.B."/>
            <person name="Monteiro-Vitorello C.B."/>
            <person name="Van Sluys M.A."/>
            <person name="Almeida N.F. Jr."/>
            <person name="Alves L.M.C."/>
            <person name="do Amaral A.M."/>
            <person name="Bertolini M.C."/>
            <person name="Camargo L.E.A."/>
            <person name="Camarotte G."/>
            <person name="Cannavan F."/>
            <person name="Cardozo J."/>
            <person name="Chambergo F."/>
            <person name="Ciapina L.P."/>
            <person name="Cicarelli R.M.B."/>
            <person name="Coutinho L.L."/>
            <person name="Cursino-Santos J.R."/>
            <person name="El-Dorry H."/>
            <person name="Faria J.B."/>
            <person name="Ferreira A.J.S."/>
            <person name="Ferreira R.C.C."/>
            <person name="Ferro M.I.T."/>
            <person name="Formighieri E.F."/>
            <person name="Franco M.C."/>
            <person name="Greggio C.C."/>
            <person name="Gruber A."/>
            <person name="Katsuyama A.M."/>
            <person name="Kishi L.T."/>
            <person name="Leite R.P."/>
            <person name="Lemos E.G.M."/>
            <person name="Lemos M.V.F."/>
            <person name="Locali E.C."/>
            <person name="Machado M.A."/>
            <person name="Madeira A.M.B.N."/>
            <person name="Martinez-Rossi N.M."/>
            <person name="Martins E.C."/>
            <person name="Meidanis J."/>
            <person name="Menck C.F.M."/>
            <person name="Miyaki C.Y."/>
            <person name="Moon D.H."/>
            <person name="Moreira L.M."/>
            <person name="Novo M.T.M."/>
            <person name="Okura V.K."/>
            <person name="Oliveira M.C."/>
            <person name="Oliveira V.R."/>
            <person name="Pereira H.A."/>
            <person name="Rossi A."/>
            <person name="Sena J.A.D."/>
            <person name="Silva C."/>
            <person name="de Souza R.F."/>
            <person name="Spinola L.A.F."/>
            <person name="Takita M.A."/>
            <person name="Tamura R.E."/>
            <person name="Teixeira E.C."/>
            <person name="Tezza R.I.D."/>
            <person name="Trindade dos Santos M."/>
            <person name="Truffi D."/>
            <person name="Tsai S.M."/>
            <person name="White F.F."/>
            <person name="Setubal J.C."/>
            <person name="Kitajima J.P."/>
        </authorList>
    </citation>
    <scope>NUCLEOTIDE SEQUENCE [LARGE SCALE GENOMIC DNA]</scope>
    <source>
        <strain>306</strain>
    </source>
</reference>
<organism>
    <name type="scientific">Xanthomonas axonopodis pv. citri (strain 306)</name>
    <dbReference type="NCBI Taxonomy" id="190486"/>
    <lineage>
        <taxon>Bacteria</taxon>
        <taxon>Pseudomonadati</taxon>
        <taxon>Pseudomonadota</taxon>
        <taxon>Gammaproteobacteria</taxon>
        <taxon>Lysobacterales</taxon>
        <taxon>Lysobacteraceae</taxon>
        <taxon>Xanthomonas</taxon>
    </lineage>
</organism>
<feature type="chain" id="PRO_0000117217" description="tRNA uridine 5-carboxymethylaminomethyl modification enzyme MnmG">
    <location>
        <begin position="1"/>
        <end position="634"/>
    </location>
</feature>
<feature type="binding site" evidence="1">
    <location>
        <begin position="14"/>
        <end position="19"/>
    </location>
    <ligand>
        <name>FAD</name>
        <dbReference type="ChEBI" id="CHEBI:57692"/>
    </ligand>
</feature>
<feature type="binding site" evidence="1">
    <location>
        <begin position="279"/>
        <end position="293"/>
    </location>
    <ligand>
        <name>NAD(+)</name>
        <dbReference type="ChEBI" id="CHEBI:57540"/>
    </ligand>
</feature>